<evidence type="ECO:0000255" key="1">
    <source>
        <dbReference type="HAMAP-Rule" id="MF_00135"/>
    </source>
</evidence>
<gene>
    <name evidence="1" type="primary">trpF</name>
    <name type="ordered locus">RPD_0196</name>
</gene>
<sequence length="218" mass="22810">MSVVVKICGLSTCDTLEAAVAAGADMVGFVFFPASPRHVGLDVARELSDQVGSRAAKVALTVDASDALIRDIVEILKPDLLQLHGSESPERVRALKQAFGLPVMKAIAVATAADLAMLPAYAETADRILFDARPPKDATRPGGLGMTFDWELLRDLDLSLPFMVSGGVNPGNVAAALRVTGAGGVDVSSGVERAPGAKDPELIRSFIRAARASEELMT</sequence>
<reference key="1">
    <citation type="submission" date="2006-03" db="EMBL/GenBank/DDBJ databases">
        <title>Complete sequence of Rhodopseudomonas palustris BisB5.</title>
        <authorList>
            <consortium name="US DOE Joint Genome Institute"/>
            <person name="Copeland A."/>
            <person name="Lucas S."/>
            <person name="Lapidus A."/>
            <person name="Barry K."/>
            <person name="Detter J.C."/>
            <person name="Glavina del Rio T."/>
            <person name="Hammon N."/>
            <person name="Israni S."/>
            <person name="Dalin E."/>
            <person name="Tice H."/>
            <person name="Pitluck S."/>
            <person name="Chain P."/>
            <person name="Malfatti S."/>
            <person name="Shin M."/>
            <person name="Vergez L."/>
            <person name="Schmutz J."/>
            <person name="Larimer F."/>
            <person name="Land M."/>
            <person name="Hauser L."/>
            <person name="Pelletier D.A."/>
            <person name="Kyrpides N."/>
            <person name="Lykidis A."/>
            <person name="Oda Y."/>
            <person name="Harwood C.S."/>
            <person name="Richardson P."/>
        </authorList>
    </citation>
    <scope>NUCLEOTIDE SEQUENCE [LARGE SCALE GENOMIC DNA]</scope>
    <source>
        <strain>BisB5</strain>
    </source>
</reference>
<name>TRPF_RHOPS</name>
<dbReference type="EC" id="5.3.1.24" evidence="1"/>
<dbReference type="EMBL" id="CP000283">
    <property type="protein sequence ID" value="ABE37436.1"/>
    <property type="molecule type" value="Genomic_DNA"/>
</dbReference>
<dbReference type="SMR" id="Q13EQ3"/>
<dbReference type="STRING" id="316057.RPD_0196"/>
<dbReference type="KEGG" id="rpd:RPD_0196"/>
<dbReference type="eggNOG" id="COG0135">
    <property type="taxonomic scope" value="Bacteria"/>
</dbReference>
<dbReference type="HOGENOM" id="CLU_076364_1_1_5"/>
<dbReference type="BioCyc" id="RPAL316057:RPD_RS00995-MONOMER"/>
<dbReference type="UniPathway" id="UPA00035">
    <property type="reaction ID" value="UER00042"/>
</dbReference>
<dbReference type="Proteomes" id="UP000001818">
    <property type="component" value="Chromosome"/>
</dbReference>
<dbReference type="GO" id="GO:0004640">
    <property type="term" value="F:phosphoribosylanthranilate isomerase activity"/>
    <property type="evidence" value="ECO:0007669"/>
    <property type="project" value="UniProtKB-UniRule"/>
</dbReference>
<dbReference type="GO" id="GO:0000162">
    <property type="term" value="P:L-tryptophan biosynthetic process"/>
    <property type="evidence" value="ECO:0007669"/>
    <property type="project" value="UniProtKB-UniRule"/>
</dbReference>
<dbReference type="CDD" id="cd00405">
    <property type="entry name" value="PRAI"/>
    <property type="match status" value="1"/>
</dbReference>
<dbReference type="Gene3D" id="3.20.20.70">
    <property type="entry name" value="Aldolase class I"/>
    <property type="match status" value="1"/>
</dbReference>
<dbReference type="HAMAP" id="MF_00135">
    <property type="entry name" value="PRAI"/>
    <property type="match status" value="1"/>
</dbReference>
<dbReference type="InterPro" id="IPR013785">
    <property type="entry name" value="Aldolase_TIM"/>
</dbReference>
<dbReference type="InterPro" id="IPR001240">
    <property type="entry name" value="PRAI_dom"/>
</dbReference>
<dbReference type="InterPro" id="IPR011060">
    <property type="entry name" value="RibuloseP-bd_barrel"/>
</dbReference>
<dbReference type="InterPro" id="IPR044643">
    <property type="entry name" value="TrpF_fam"/>
</dbReference>
<dbReference type="NCBIfam" id="NF002295">
    <property type="entry name" value="PRK01222.1-1"/>
    <property type="match status" value="1"/>
</dbReference>
<dbReference type="PANTHER" id="PTHR42894">
    <property type="entry name" value="N-(5'-PHOSPHORIBOSYL)ANTHRANILATE ISOMERASE"/>
    <property type="match status" value="1"/>
</dbReference>
<dbReference type="PANTHER" id="PTHR42894:SF1">
    <property type="entry name" value="N-(5'-PHOSPHORIBOSYL)ANTHRANILATE ISOMERASE"/>
    <property type="match status" value="1"/>
</dbReference>
<dbReference type="Pfam" id="PF00697">
    <property type="entry name" value="PRAI"/>
    <property type="match status" value="1"/>
</dbReference>
<dbReference type="SUPFAM" id="SSF51366">
    <property type="entry name" value="Ribulose-phoshate binding barrel"/>
    <property type="match status" value="1"/>
</dbReference>
<proteinExistence type="inferred from homology"/>
<feature type="chain" id="PRO_1000018635" description="N-(5'-phosphoribosyl)anthranilate isomerase">
    <location>
        <begin position="1"/>
        <end position="218"/>
    </location>
</feature>
<accession>Q13EQ3</accession>
<organism>
    <name type="scientific">Rhodopseudomonas palustris (strain BisB5)</name>
    <dbReference type="NCBI Taxonomy" id="316057"/>
    <lineage>
        <taxon>Bacteria</taxon>
        <taxon>Pseudomonadati</taxon>
        <taxon>Pseudomonadota</taxon>
        <taxon>Alphaproteobacteria</taxon>
        <taxon>Hyphomicrobiales</taxon>
        <taxon>Nitrobacteraceae</taxon>
        <taxon>Rhodopseudomonas</taxon>
    </lineage>
</organism>
<comment type="catalytic activity">
    <reaction evidence="1">
        <text>N-(5-phospho-beta-D-ribosyl)anthranilate = 1-(2-carboxyphenylamino)-1-deoxy-D-ribulose 5-phosphate</text>
        <dbReference type="Rhea" id="RHEA:21540"/>
        <dbReference type="ChEBI" id="CHEBI:18277"/>
        <dbReference type="ChEBI" id="CHEBI:58613"/>
        <dbReference type="EC" id="5.3.1.24"/>
    </reaction>
</comment>
<comment type="pathway">
    <text evidence="1">Amino-acid biosynthesis; L-tryptophan biosynthesis; L-tryptophan from chorismate: step 3/5.</text>
</comment>
<comment type="similarity">
    <text evidence="1">Belongs to the TrpF family.</text>
</comment>
<keyword id="KW-0028">Amino-acid biosynthesis</keyword>
<keyword id="KW-0057">Aromatic amino acid biosynthesis</keyword>
<keyword id="KW-0413">Isomerase</keyword>
<keyword id="KW-0822">Tryptophan biosynthesis</keyword>
<protein>
    <recommendedName>
        <fullName evidence="1">N-(5'-phosphoribosyl)anthranilate isomerase</fullName>
        <shortName evidence="1">PRAI</shortName>
        <ecNumber evidence="1">5.3.1.24</ecNumber>
    </recommendedName>
</protein>